<organism>
    <name type="scientific">Schizosaccharomyces pombe (strain 972 / ATCC 24843)</name>
    <name type="common">Fission yeast</name>
    <dbReference type="NCBI Taxonomy" id="284812"/>
    <lineage>
        <taxon>Eukaryota</taxon>
        <taxon>Fungi</taxon>
        <taxon>Dikarya</taxon>
        <taxon>Ascomycota</taxon>
        <taxon>Taphrinomycotina</taxon>
        <taxon>Schizosaccharomycetes</taxon>
        <taxon>Schizosaccharomycetales</taxon>
        <taxon>Schizosaccharomycetaceae</taxon>
        <taxon>Schizosaccharomyces</taxon>
    </lineage>
</organism>
<keyword id="KW-0963">Cytoplasm</keyword>
<keyword id="KW-0539">Nucleus</keyword>
<keyword id="KW-1185">Reference proteome</keyword>
<dbReference type="EMBL" id="CU329671">
    <property type="protein sequence ID" value="CAC34973.1"/>
    <property type="molecule type" value="Genomic_DNA"/>
</dbReference>
<dbReference type="RefSeq" id="NP_596558.1">
    <property type="nucleotide sequence ID" value="NM_001022479.2"/>
</dbReference>
<dbReference type="PaxDb" id="4896-SPBC13G1.15c.1"/>
<dbReference type="EnsemblFungi" id="SPBC13G1.15c.1">
    <property type="protein sequence ID" value="SPBC13G1.15c.1:pep"/>
    <property type="gene ID" value="SPBC13G1.15c"/>
</dbReference>
<dbReference type="KEGG" id="spo:2539742"/>
<dbReference type="PomBase" id="SPBC13G1.15c"/>
<dbReference type="VEuPathDB" id="FungiDB:SPBC13G1.15c"/>
<dbReference type="HOGENOM" id="CLU_2159873_0_0_1"/>
<dbReference type="InParanoid" id="Q9C0X3"/>
<dbReference type="PRO" id="PR:Q9C0X3"/>
<dbReference type="Proteomes" id="UP000002485">
    <property type="component" value="Chromosome II"/>
</dbReference>
<dbReference type="GO" id="GO:0005829">
    <property type="term" value="C:cytosol"/>
    <property type="evidence" value="ECO:0007005"/>
    <property type="project" value="PomBase"/>
</dbReference>
<dbReference type="GO" id="GO:0005634">
    <property type="term" value="C:nucleus"/>
    <property type="evidence" value="ECO:0007005"/>
    <property type="project" value="PomBase"/>
</dbReference>
<evidence type="ECO:0000269" key="1">
    <source>
    </source>
</evidence>
<accession>Q9C0X3</accession>
<feature type="chain" id="PRO_0000303981" description="Putative uncharacterized protein C13G1.15c">
    <location>
        <begin position="1"/>
        <end position="111"/>
    </location>
</feature>
<sequence>MASCCIFCAQFVLNRNLLEANKYKLSEITFKVYISIRRLLIVVITLYRRIVECCASLCSLIFSKYYLHYKTFRILTIIQSWSDKVSVLPNRLYCLPFCNAFIEFVKKLTET</sequence>
<comment type="subcellular location">
    <subcellularLocation>
        <location evidence="1">Cytoplasm</location>
    </subcellularLocation>
    <subcellularLocation>
        <location evidence="1">Nucleus</location>
    </subcellularLocation>
</comment>
<proteinExistence type="predicted"/>
<name>YBBF_SCHPO</name>
<gene>
    <name type="ORF">SPBC13G1.15c</name>
</gene>
<protein>
    <recommendedName>
        <fullName>Putative uncharacterized protein C13G1.15c</fullName>
    </recommendedName>
</protein>
<reference key="1">
    <citation type="journal article" date="2002" name="Nature">
        <title>The genome sequence of Schizosaccharomyces pombe.</title>
        <authorList>
            <person name="Wood V."/>
            <person name="Gwilliam R."/>
            <person name="Rajandream M.A."/>
            <person name="Lyne M.H."/>
            <person name="Lyne R."/>
            <person name="Stewart A."/>
            <person name="Sgouros J.G."/>
            <person name="Peat N."/>
            <person name="Hayles J."/>
            <person name="Baker S.G."/>
            <person name="Basham D."/>
            <person name="Bowman S."/>
            <person name="Brooks K."/>
            <person name="Brown D."/>
            <person name="Brown S."/>
            <person name="Chillingworth T."/>
            <person name="Churcher C.M."/>
            <person name="Collins M."/>
            <person name="Connor R."/>
            <person name="Cronin A."/>
            <person name="Davis P."/>
            <person name="Feltwell T."/>
            <person name="Fraser A."/>
            <person name="Gentles S."/>
            <person name="Goble A."/>
            <person name="Hamlin N."/>
            <person name="Harris D.E."/>
            <person name="Hidalgo J."/>
            <person name="Hodgson G."/>
            <person name="Holroyd S."/>
            <person name="Hornsby T."/>
            <person name="Howarth S."/>
            <person name="Huckle E.J."/>
            <person name="Hunt S."/>
            <person name="Jagels K."/>
            <person name="James K.D."/>
            <person name="Jones L."/>
            <person name="Jones M."/>
            <person name="Leather S."/>
            <person name="McDonald S."/>
            <person name="McLean J."/>
            <person name="Mooney P."/>
            <person name="Moule S."/>
            <person name="Mungall K.L."/>
            <person name="Murphy L.D."/>
            <person name="Niblett D."/>
            <person name="Odell C."/>
            <person name="Oliver K."/>
            <person name="O'Neil S."/>
            <person name="Pearson D."/>
            <person name="Quail M.A."/>
            <person name="Rabbinowitsch E."/>
            <person name="Rutherford K.M."/>
            <person name="Rutter S."/>
            <person name="Saunders D."/>
            <person name="Seeger K."/>
            <person name="Sharp S."/>
            <person name="Skelton J."/>
            <person name="Simmonds M.N."/>
            <person name="Squares R."/>
            <person name="Squares S."/>
            <person name="Stevens K."/>
            <person name="Taylor K."/>
            <person name="Taylor R.G."/>
            <person name="Tivey A."/>
            <person name="Walsh S.V."/>
            <person name="Warren T."/>
            <person name="Whitehead S."/>
            <person name="Woodward J.R."/>
            <person name="Volckaert G."/>
            <person name="Aert R."/>
            <person name="Robben J."/>
            <person name="Grymonprez B."/>
            <person name="Weltjens I."/>
            <person name="Vanstreels E."/>
            <person name="Rieger M."/>
            <person name="Schaefer M."/>
            <person name="Mueller-Auer S."/>
            <person name="Gabel C."/>
            <person name="Fuchs M."/>
            <person name="Duesterhoeft A."/>
            <person name="Fritzc C."/>
            <person name="Holzer E."/>
            <person name="Moestl D."/>
            <person name="Hilbert H."/>
            <person name="Borzym K."/>
            <person name="Langer I."/>
            <person name="Beck A."/>
            <person name="Lehrach H."/>
            <person name="Reinhardt R."/>
            <person name="Pohl T.M."/>
            <person name="Eger P."/>
            <person name="Zimmermann W."/>
            <person name="Wedler H."/>
            <person name="Wambutt R."/>
            <person name="Purnelle B."/>
            <person name="Goffeau A."/>
            <person name="Cadieu E."/>
            <person name="Dreano S."/>
            <person name="Gloux S."/>
            <person name="Lelaure V."/>
            <person name="Mottier S."/>
            <person name="Galibert F."/>
            <person name="Aves S.J."/>
            <person name="Xiang Z."/>
            <person name="Hunt C."/>
            <person name="Moore K."/>
            <person name="Hurst S.M."/>
            <person name="Lucas M."/>
            <person name="Rochet M."/>
            <person name="Gaillardin C."/>
            <person name="Tallada V.A."/>
            <person name="Garzon A."/>
            <person name="Thode G."/>
            <person name="Daga R.R."/>
            <person name="Cruzado L."/>
            <person name="Jimenez J."/>
            <person name="Sanchez M."/>
            <person name="del Rey F."/>
            <person name="Benito J."/>
            <person name="Dominguez A."/>
            <person name="Revuelta J.L."/>
            <person name="Moreno S."/>
            <person name="Armstrong J."/>
            <person name="Forsburg S.L."/>
            <person name="Cerutti L."/>
            <person name="Lowe T."/>
            <person name="McCombie W.R."/>
            <person name="Paulsen I."/>
            <person name="Potashkin J."/>
            <person name="Shpakovski G.V."/>
            <person name="Ussery D."/>
            <person name="Barrell B.G."/>
            <person name="Nurse P."/>
        </authorList>
    </citation>
    <scope>NUCLEOTIDE SEQUENCE [LARGE SCALE GENOMIC DNA]</scope>
    <source>
        <strain>972 / ATCC 24843</strain>
    </source>
</reference>
<reference key="2">
    <citation type="journal article" date="2006" name="Nat. Biotechnol.">
        <title>ORFeome cloning and global analysis of protein localization in the fission yeast Schizosaccharomyces pombe.</title>
        <authorList>
            <person name="Matsuyama A."/>
            <person name="Arai R."/>
            <person name="Yashiroda Y."/>
            <person name="Shirai A."/>
            <person name="Kamata A."/>
            <person name="Sekido S."/>
            <person name="Kobayashi Y."/>
            <person name="Hashimoto A."/>
            <person name="Hamamoto M."/>
            <person name="Hiraoka Y."/>
            <person name="Horinouchi S."/>
            <person name="Yoshida M."/>
        </authorList>
    </citation>
    <scope>SUBCELLULAR LOCATION [LARGE SCALE ANALYSIS]</scope>
</reference>